<keyword id="KW-0238">DNA-binding</keyword>
<keyword id="KW-0479">Metal-binding</keyword>
<keyword id="KW-1185">Reference proteome</keyword>
<keyword id="KW-0862">Zinc</keyword>
<keyword id="KW-0863">Zinc-finger</keyword>
<evidence type="ECO:0000255" key="1">
    <source>
        <dbReference type="PROSITE-ProRule" id="PRU00092"/>
    </source>
</evidence>
<evidence type="ECO:0000255" key="2">
    <source>
        <dbReference type="PROSITE-ProRule" id="PRU00723"/>
    </source>
</evidence>
<evidence type="ECO:0000256" key="3">
    <source>
        <dbReference type="SAM" id="MobiDB-lite"/>
    </source>
</evidence>
<proteinExistence type="evidence at transcript level"/>
<protein>
    <recommendedName>
        <fullName>Zinc finger CCCH domain-containing protein 22</fullName>
        <shortName>AtC3H22</shortName>
    </recommendedName>
</protein>
<reference key="1">
    <citation type="journal article" date="1999" name="Nature">
        <title>Sequence and analysis of chromosome 2 of the plant Arabidopsis thaliana.</title>
        <authorList>
            <person name="Lin X."/>
            <person name="Kaul S."/>
            <person name="Rounsley S.D."/>
            <person name="Shea T.P."/>
            <person name="Benito M.-I."/>
            <person name="Town C.D."/>
            <person name="Fujii C.Y."/>
            <person name="Mason T.M."/>
            <person name="Bowman C.L."/>
            <person name="Barnstead M.E."/>
            <person name="Feldblyum T.V."/>
            <person name="Buell C.R."/>
            <person name="Ketchum K.A."/>
            <person name="Lee J.J."/>
            <person name="Ronning C.M."/>
            <person name="Koo H.L."/>
            <person name="Moffat K.S."/>
            <person name="Cronin L.A."/>
            <person name="Shen M."/>
            <person name="Pai G."/>
            <person name="Van Aken S."/>
            <person name="Umayam L."/>
            <person name="Tallon L.J."/>
            <person name="Gill J.E."/>
            <person name="Adams M.D."/>
            <person name="Carrera A.J."/>
            <person name="Creasy T.H."/>
            <person name="Goodman H.M."/>
            <person name="Somerville C.R."/>
            <person name="Copenhaver G.P."/>
            <person name="Preuss D."/>
            <person name="Nierman W.C."/>
            <person name="White O."/>
            <person name="Eisen J.A."/>
            <person name="Salzberg S.L."/>
            <person name="Fraser C.M."/>
            <person name="Venter J.C."/>
        </authorList>
    </citation>
    <scope>NUCLEOTIDE SEQUENCE [LARGE SCALE GENOMIC DNA]</scope>
    <source>
        <strain>cv. Columbia</strain>
    </source>
</reference>
<reference key="2">
    <citation type="journal article" date="2017" name="Plant J.">
        <title>Araport11: a complete reannotation of the Arabidopsis thaliana reference genome.</title>
        <authorList>
            <person name="Cheng C.Y."/>
            <person name="Krishnakumar V."/>
            <person name="Chan A.P."/>
            <person name="Thibaud-Nissen F."/>
            <person name="Schobel S."/>
            <person name="Town C.D."/>
        </authorList>
    </citation>
    <scope>GENOME REANNOTATION</scope>
    <source>
        <strain>cv. Columbia</strain>
    </source>
</reference>
<reference key="3">
    <citation type="submission" date="2006-07" db="EMBL/GenBank/DDBJ databases">
        <title>Large-scale analysis of RIKEN Arabidopsis full-length (RAFL) cDNAs.</title>
        <authorList>
            <person name="Totoki Y."/>
            <person name="Seki M."/>
            <person name="Ishida J."/>
            <person name="Nakajima M."/>
            <person name="Enju A."/>
            <person name="Kamiya A."/>
            <person name="Narusaka M."/>
            <person name="Shin-i T."/>
            <person name="Nakagawa M."/>
            <person name="Sakamoto N."/>
            <person name="Oishi K."/>
            <person name="Kohara Y."/>
            <person name="Kobayashi M."/>
            <person name="Toyoda A."/>
            <person name="Sakaki Y."/>
            <person name="Sakurai T."/>
            <person name="Iida K."/>
            <person name="Akiyama K."/>
            <person name="Satou M."/>
            <person name="Toyoda T."/>
            <person name="Konagaya A."/>
            <person name="Carninci P."/>
            <person name="Kawai J."/>
            <person name="Hayashizaki Y."/>
            <person name="Shinozaki K."/>
        </authorList>
    </citation>
    <scope>NUCLEOTIDE SEQUENCE [LARGE SCALE MRNA]</scope>
    <source>
        <strain>cv. Columbia</strain>
    </source>
</reference>
<reference key="4">
    <citation type="journal article" date="2008" name="BMC Genomics">
        <title>Genome-wide analysis of CCCH zinc finger family in Arabidopsis and rice.</title>
        <authorList>
            <person name="Wang D."/>
            <person name="Guo Y."/>
            <person name="Wu C."/>
            <person name="Yang G."/>
            <person name="Li Y."/>
            <person name="Zheng C."/>
        </authorList>
    </citation>
    <scope>NOMENCLATURE</scope>
</reference>
<name>C3H22_ARATH</name>
<feature type="chain" id="PRO_0000371981" description="Zinc finger CCCH domain-containing protein 22">
    <location>
        <begin position="1"/>
        <end position="497"/>
    </location>
</feature>
<feature type="domain" description="G-patch" evidence="1">
    <location>
        <begin position="300"/>
        <end position="346"/>
    </location>
</feature>
<feature type="zinc finger region" description="C3H1-type" evidence="2">
    <location>
        <begin position="136"/>
        <end position="163"/>
    </location>
</feature>
<feature type="region of interest" description="Disordered" evidence="3">
    <location>
        <begin position="236"/>
        <end position="281"/>
    </location>
</feature>
<feature type="region of interest" description="Disordered" evidence="3">
    <location>
        <begin position="352"/>
        <end position="387"/>
    </location>
</feature>
<feature type="compositionally biased region" description="Acidic residues" evidence="3">
    <location>
        <begin position="239"/>
        <end position="268"/>
    </location>
</feature>
<feature type="compositionally biased region" description="Basic residues" evidence="3">
    <location>
        <begin position="357"/>
        <end position="372"/>
    </location>
</feature>
<feature type="compositionally biased region" description="Basic and acidic residues" evidence="3">
    <location>
        <begin position="373"/>
        <end position="387"/>
    </location>
</feature>
<gene>
    <name type="ordered locus">At2g24830</name>
    <name type="ORF">F27C12.25</name>
</gene>
<sequence>MASEENNDLENLLDIQLIEQKESLSSIDEALLSDPSNPELLSVHEELLSAIKEVEEGLLHLKRARLLEEADIVLNGLNHDAGVKPEHLEPEKTEEKKDLDGSKCRFRHTDGRWYNGRIIGFEGSDSAKISFLTPTSESMMICKFFMQQRCRFGSSCRSSHGLDVPISSLKNYEQTEWKQLMVGSKIWAVSGSKYDIWRKAELESWDDELQVGGVVFRDDKSSAKLGSDSLALSEYAQMTDDDGEEEEEEDEQQSASDSEDSVSSDYDEGSPQGIGFLESTNLPRGVQTDTALFAKWENHTRGIASKMMASMGYREGMGLGVSGQGILNPILVKVLPAKRSLDYALEHIRNGECKSEKQKKKRSRGGKRKRGKKFAEAAKAAKQEEESKPDLFSLINEQIFPTRHEKVHSESVKNRQNKGPVDRKALVEYQDEVRDLKLEMLKLEQMVNRNKKDLVVSEAATRRLKEVRKALASTLACQAAASNAIVSKENEKKWLKF</sequence>
<dbReference type="EMBL" id="AC006585">
    <property type="protein sequence ID" value="AAD23029.1"/>
    <property type="molecule type" value="Genomic_DNA"/>
</dbReference>
<dbReference type="EMBL" id="CP002685">
    <property type="protein sequence ID" value="AEC07633.1"/>
    <property type="molecule type" value="Genomic_DNA"/>
</dbReference>
<dbReference type="EMBL" id="AK229189">
    <property type="protein sequence ID" value="BAF01059.1"/>
    <property type="molecule type" value="mRNA"/>
</dbReference>
<dbReference type="PIR" id="A84641">
    <property type="entry name" value="A84641"/>
</dbReference>
<dbReference type="RefSeq" id="NP_180056.1">
    <property type="nucleotide sequence ID" value="NM_128042.4"/>
</dbReference>
<dbReference type="SMR" id="Q9SK49"/>
<dbReference type="FunCoup" id="Q9SK49">
    <property type="interactions" value="2492"/>
</dbReference>
<dbReference type="STRING" id="3702.Q9SK49"/>
<dbReference type="PaxDb" id="3702-AT2G24830.1"/>
<dbReference type="ProteomicsDB" id="240557"/>
<dbReference type="EnsemblPlants" id="AT2G24830.1">
    <property type="protein sequence ID" value="AT2G24830.1"/>
    <property type="gene ID" value="AT2G24830"/>
</dbReference>
<dbReference type="GeneID" id="817020"/>
<dbReference type="Gramene" id="AT2G24830.1">
    <property type="protein sequence ID" value="AT2G24830.1"/>
    <property type="gene ID" value="AT2G24830"/>
</dbReference>
<dbReference type="KEGG" id="ath:AT2G24830"/>
<dbReference type="Araport" id="AT2G24830"/>
<dbReference type="TAIR" id="AT2G24830"/>
<dbReference type="eggNOG" id="KOG2185">
    <property type="taxonomic scope" value="Eukaryota"/>
</dbReference>
<dbReference type="HOGENOM" id="CLU_043217_0_0_1"/>
<dbReference type="InParanoid" id="Q9SK49"/>
<dbReference type="OMA" id="QYTRGIG"/>
<dbReference type="PhylomeDB" id="Q9SK49"/>
<dbReference type="PRO" id="PR:Q9SK49"/>
<dbReference type="Proteomes" id="UP000006548">
    <property type="component" value="Chromosome 2"/>
</dbReference>
<dbReference type="ExpressionAtlas" id="Q9SK49">
    <property type="expression patterns" value="baseline and differential"/>
</dbReference>
<dbReference type="GO" id="GO:0003677">
    <property type="term" value="F:DNA binding"/>
    <property type="evidence" value="ECO:0007669"/>
    <property type="project" value="UniProtKB-KW"/>
</dbReference>
<dbReference type="GO" id="GO:0008270">
    <property type="term" value="F:zinc ion binding"/>
    <property type="evidence" value="ECO:0007669"/>
    <property type="project" value="UniProtKB-KW"/>
</dbReference>
<dbReference type="Gene3D" id="2.30.30.1190">
    <property type="match status" value="1"/>
</dbReference>
<dbReference type="InterPro" id="IPR000467">
    <property type="entry name" value="G_patch_dom"/>
</dbReference>
<dbReference type="InterPro" id="IPR041367">
    <property type="entry name" value="Znf-CCCH_4"/>
</dbReference>
<dbReference type="InterPro" id="IPR000571">
    <property type="entry name" value="Znf_CCCH"/>
</dbReference>
<dbReference type="PANTHER" id="PTHR47650">
    <property type="entry name" value="ZINC FINGER CCCH DOMAIN-CONTAINING PROTEIN 22"/>
    <property type="match status" value="1"/>
</dbReference>
<dbReference type="PANTHER" id="PTHR47650:SF2">
    <property type="entry name" value="ZINC FINGER CCCH DOMAIN-CONTAINING PROTEIN 22"/>
    <property type="match status" value="1"/>
</dbReference>
<dbReference type="Pfam" id="PF01585">
    <property type="entry name" value="G-patch"/>
    <property type="match status" value="1"/>
</dbReference>
<dbReference type="Pfam" id="PF18044">
    <property type="entry name" value="zf-CCCH_4"/>
    <property type="match status" value="1"/>
</dbReference>
<dbReference type="SMART" id="SM00443">
    <property type="entry name" value="G_patch"/>
    <property type="match status" value="1"/>
</dbReference>
<dbReference type="SMART" id="SM00356">
    <property type="entry name" value="ZnF_C3H1"/>
    <property type="match status" value="1"/>
</dbReference>
<dbReference type="PROSITE" id="PS50174">
    <property type="entry name" value="G_PATCH"/>
    <property type="match status" value="1"/>
</dbReference>
<dbReference type="PROSITE" id="PS50103">
    <property type="entry name" value="ZF_C3H1"/>
    <property type="match status" value="1"/>
</dbReference>
<organism>
    <name type="scientific">Arabidopsis thaliana</name>
    <name type="common">Mouse-ear cress</name>
    <dbReference type="NCBI Taxonomy" id="3702"/>
    <lineage>
        <taxon>Eukaryota</taxon>
        <taxon>Viridiplantae</taxon>
        <taxon>Streptophyta</taxon>
        <taxon>Embryophyta</taxon>
        <taxon>Tracheophyta</taxon>
        <taxon>Spermatophyta</taxon>
        <taxon>Magnoliopsida</taxon>
        <taxon>eudicotyledons</taxon>
        <taxon>Gunneridae</taxon>
        <taxon>Pentapetalae</taxon>
        <taxon>rosids</taxon>
        <taxon>malvids</taxon>
        <taxon>Brassicales</taxon>
        <taxon>Brassicaceae</taxon>
        <taxon>Camelineae</taxon>
        <taxon>Arabidopsis</taxon>
    </lineage>
</organism>
<accession>Q9SK49</accession>